<comment type="function">
    <text evidence="1">Catalyzes the specific phosphorylation of 1,6-anhydro-N-acetylmuramic acid (anhMurNAc) with the simultaneous cleavage of the 1,6-anhydro ring, generating MurNAc-6-P. Is required for the utilization of anhMurNAc either imported from the medium or derived from its own cell wall murein, and thus plays a role in cell wall recycling.</text>
</comment>
<comment type="catalytic activity">
    <reaction evidence="1">
        <text>1,6-anhydro-N-acetyl-beta-muramate + ATP + H2O = N-acetyl-D-muramate 6-phosphate + ADP + H(+)</text>
        <dbReference type="Rhea" id="RHEA:24952"/>
        <dbReference type="ChEBI" id="CHEBI:15377"/>
        <dbReference type="ChEBI" id="CHEBI:15378"/>
        <dbReference type="ChEBI" id="CHEBI:30616"/>
        <dbReference type="ChEBI" id="CHEBI:58690"/>
        <dbReference type="ChEBI" id="CHEBI:58722"/>
        <dbReference type="ChEBI" id="CHEBI:456216"/>
        <dbReference type="EC" id="2.7.1.170"/>
    </reaction>
</comment>
<comment type="pathway">
    <text evidence="1">Amino-sugar metabolism; 1,6-anhydro-N-acetylmuramate degradation.</text>
</comment>
<comment type="pathway">
    <text evidence="1">Cell wall biogenesis; peptidoglycan recycling.</text>
</comment>
<comment type="similarity">
    <text evidence="1">Belongs to the anhydro-N-acetylmuramic acid kinase family.</text>
</comment>
<comment type="sequence caution" evidence="2">
    <conflict type="erroneous initiation">
        <sequence resource="EMBL-CDS" id="BAC93462"/>
    </conflict>
</comment>
<evidence type="ECO:0000255" key="1">
    <source>
        <dbReference type="HAMAP-Rule" id="MF_01270"/>
    </source>
</evidence>
<evidence type="ECO:0000305" key="2"/>
<keyword id="KW-0067">ATP-binding</keyword>
<keyword id="KW-0119">Carbohydrate metabolism</keyword>
<keyword id="KW-0418">Kinase</keyword>
<keyword id="KW-0547">Nucleotide-binding</keyword>
<keyword id="KW-0808">Transferase</keyword>
<name>ANMK_VIBVY</name>
<dbReference type="EC" id="2.7.1.170" evidence="1"/>
<dbReference type="EMBL" id="BA000037">
    <property type="protein sequence ID" value="BAC93462.1"/>
    <property type="status" value="ALT_INIT"/>
    <property type="molecule type" value="Genomic_DNA"/>
</dbReference>
<dbReference type="RefSeq" id="WP_011149561.1">
    <property type="nucleotide sequence ID" value="NC_005139.1"/>
</dbReference>
<dbReference type="SMR" id="Q7MNL7"/>
<dbReference type="STRING" id="672.VV93_v1c06360"/>
<dbReference type="KEGG" id="vvy:VV0699"/>
<dbReference type="PATRIC" id="fig|196600.6.peg.717"/>
<dbReference type="eggNOG" id="COG2377">
    <property type="taxonomic scope" value="Bacteria"/>
</dbReference>
<dbReference type="HOGENOM" id="CLU_038782_0_0_6"/>
<dbReference type="UniPathway" id="UPA00343"/>
<dbReference type="UniPathway" id="UPA00544"/>
<dbReference type="Proteomes" id="UP000002675">
    <property type="component" value="Chromosome I"/>
</dbReference>
<dbReference type="GO" id="GO:0005524">
    <property type="term" value="F:ATP binding"/>
    <property type="evidence" value="ECO:0007669"/>
    <property type="project" value="UniProtKB-UniRule"/>
</dbReference>
<dbReference type="GO" id="GO:0016301">
    <property type="term" value="F:kinase activity"/>
    <property type="evidence" value="ECO:0007669"/>
    <property type="project" value="UniProtKB-KW"/>
</dbReference>
<dbReference type="GO" id="GO:0016773">
    <property type="term" value="F:phosphotransferase activity, alcohol group as acceptor"/>
    <property type="evidence" value="ECO:0007669"/>
    <property type="project" value="UniProtKB-UniRule"/>
</dbReference>
<dbReference type="GO" id="GO:0097175">
    <property type="term" value="P:1,6-anhydro-N-acetyl-beta-muramic acid catabolic process"/>
    <property type="evidence" value="ECO:0007669"/>
    <property type="project" value="UniProtKB-UniRule"/>
</dbReference>
<dbReference type="GO" id="GO:0006040">
    <property type="term" value="P:amino sugar metabolic process"/>
    <property type="evidence" value="ECO:0007669"/>
    <property type="project" value="InterPro"/>
</dbReference>
<dbReference type="GO" id="GO:0009254">
    <property type="term" value="P:peptidoglycan turnover"/>
    <property type="evidence" value="ECO:0007669"/>
    <property type="project" value="UniProtKB-UniRule"/>
</dbReference>
<dbReference type="CDD" id="cd24050">
    <property type="entry name" value="ASKHA_NBD_ANMK"/>
    <property type="match status" value="1"/>
</dbReference>
<dbReference type="Gene3D" id="3.30.420.40">
    <property type="match status" value="2"/>
</dbReference>
<dbReference type="HAMAP" id="MF_01270">
    <property type="entry name" value="AnhMurNAc_kinase"/>
    <property type="match status" value="1"/>
</dbReference>
<dbReference type="InterPro" id="IPR005338">
    <property type="entry name" value="Anhydro_N_Ac-Mur_kinase"/>
</dbReference>
<dbReference type="InterPro" id="IPR043129">
    <property type="entry name" value="ATPase_NBD"/>
</dbReference>
<dbReference type="NCBIfam" id="NF007139">
    <property type="entry name" value="PRK09585.1-3"/>
    <property type="match status" value="1"/>
</dbReference>
<dbReference type="NCBIfam" id="NF007148">
    <property type="entry name" value="PRK09585.3-2"/>
    <property type="match status" value="1"/>
</dbReference>
<dbReference type="PANTHER" id="PTHR30605">
    <property type="entry name" value="ANHYDRO-N-ACETYLMURAMIC ACID KINASE"/>
    <property type="match status" value="1"/>
</dbReference>
<dbReference type="PANTHER" id="PTHR30605:SF0">
    <property type="entry name" value="ANHYDRO-N-ACETYLMURAMIC ACID KINASE"/>
    <property type="match status" value="1"/>
</dbReference>
<dbReference type="Pfam" id="PF03702">
    <property type="entry name" value="AnmK"/>
    <property type="match status" value="1"/>
</dbReference>
<dbReference type="SUPFAM" id="SSF53067">
    <property type="entry name" value="Actin-like ATPase domain"/>
    <property type="match status" value="1"/>
</dbReference>
<organism>
    <name type="scientific">Vibrio vulnificus (strain YJ016)</name>
    <dbReference type="NCBI Taxonomy" id="196600"/>
    <lineage>
        <taxon>Bacteria</taxon>
        <taxon>Pseudomonadati</taxon>
        <taxon>Pseudomonadota</taxon>
        <taxon>Gammaproteobacteria</taxon>
        <taxon>Vibrionales</taxon>
        <taxon>Vibrionaceae</taxon>
        <taxon>Vibrio</taxon>
    </lineage>
</organism>
<proteinExistence type="inferred from homology"/>
<gene>
    <name evidence="1" type="primary">anmK</name>
    <name type="ordered locus">VV0699</name>
</gene>
<feature type="chain" id="PRO_0000250082" description="Anhydro-N-acetylmuramic acid kinase">
    <location>
        <begin position="1"/>
        <end position="370"/>
    </location>
</feature>
<feature type="binding site" evidence="1">
    <location>
        <begin position="13"/>
        <end position="20"/>
    </location>
    <ligand>
        <name>ATP</name>
        <dbReference type="ChEBI" id="CHEBI:30616"/>
    </ligand>
</feature>
<protein>
    <recommendedName>
        <fullName evidence="1">Anhydro-N-acetylmuramic acid kinase</fullName>
        <ecNumber evidence="1">2.7.1.170</ecNumber>
    </recommendedName>
    <alternativeName>
        <fullName evidence="1">AnhMurNAc kinase</fullName>
    </alternativeName>
</protein>
<sequence length="370" mass="40766">MSTKELYIGVMSGTSMDGVDCALVEFDQEQVRLIAHSDYPMPADLRQQLLSVCTGQATNLKQIGELDHRLGHLFADAVMDLLSQAGVDASQICAIGNHGQTVFHQPNGEFPFTTQLGDANIIATRTNIDTVADFRRKDMALGGQGAPLVPAFHQSVFALQDSTTVVLNIGGIANISVLHPTRPVLGYDTGPGNMLMDAWCETHTQQNYDKDARFALQGEVNEALLNSLLQEPYLHQDAPKSTGRELFNMEWLTAKLQGQNYRSEDVQRTLCEYTALTISKEVERFRYGPTPQLLVCGGGARNPLLMQRLQQQLSHWQVSTTDAKGVSGDYMEAMAFAWLAYRHMHRLPSNLPEVTGASRLASLGVLYPKA</sequence>
<reference key="1">
    <citation type="journal article" date="2003" name="Genome Res.">
        <title>Comparative genome analysis of Vibrio vulnificus, a marine pathogen.</title>
        <authorList>
            <person name="Chen C.-Y."/>
            <person name="Wu K.-M."/>
            <person name="Chang Y.-C."/>
            <person name="Chang C.-H."/>
            <person name="Tsai H.-C."/>
            <person name="Liao T.-L."/>
            <person name="Liu Y.-M."/>
            <person name="Chen H.-J."/>
            <person name="Shen A.B.-T."/>
            <person name="Li J.-C."/>
            <person name="Su T.-L."/>
            <person name="Shao C.-P."/>
            <person name="Lee C.-T."/>
            <person name="Hor L.-I."/>
            <person name="Tsai S.-F."/>
        </authorList>
    </citation>
    <scope>NUCLEOTIDE SEQUENCE [LARGE SCALE GENOMIC DNA]</scope>
    <source>
        <strain>YJ016</strain>
    </source>
</reference>
<accession>Q7MNL7</accession>